<protein>
    <recommendedName>
        <fullName>Pyruvoyl-dependent arginine decarboxylase AaxB</fullName>
        <shortName>PvlArgDC</shortName>
        <ecNumber>4.1.1.19</ecNumber>
    </recommendedName>
    <alternativeName>
        <fullName>Biodegradative arginine decarboxylase</fullName>
    </alternativeName>
    <component>
        <recommendedName>
            <fullName>Pyruvoyl-dependent arginine decarboxylase subunit beta</fullName>
        </recommendedName>
    </component>
    <component>
        <recommendedName>
            <fullName>Pyruvoyl-dependent arginine decarboxylase subunit alpha</fullName>
        </recommendedName>
    </component>
</protein>
<evidence type="ECO:0000250" key="1"/>
<evidence type="ECO:0000305" key="2"/>
<accession>Q822F3</accession>
<gene>
    <name type="primary">aaxB</name>
    <name type="ordered locus">CCA_00730</name>
</gene>
<feature type="chain" id="PRO_0000364039" description="Pyruvoyl-dependent arginine decarboxylase subunit beta">
    <location>
        <begin position="1"/>
        <end position="52"/>
    </location>
</feature>
<feature type="chain" id="PRO_0000364040" description="Pyruvoyl-dependent arginine decarboxylase subunit alpha">
    <location>
        <begin position="53"/>
        <end position="195"/>
    </location>
</feature>
<feature type="site" description="Cleavage (non-hydrolytic)" evidence="1">
    <location>
        <begin position="52"/>
        <end position="53"/>
    </location>
</feature>
<feature type="modified residue" description="Pyruvic acid (Ser)" evidence="1">
    <location>
        <position position="53"/>
    </location>
</feature>
<name>AAXB_CHLCV</name>
<keyword id="KW-0963">Cytoplasm</keyword>
<keyword id="KW-0210">Decarboxylase</keyword>
<keyword id="KW-0456">Lyase</keyword>
<keyword id="KW-0670">Pyruvate</keyword>
<keyword id="KW-0843">Virulence</keyword>
<organism>
    <name type="scientific">Chlamydia caviae (strain ATCC VR-813 / DSM 19441 / 03DC25 / GPIC)</name>
    <name type="common">Chlamydophila caviae</name>
    <dbReference type="NCBI Taxonomy" id="227941"/>
    <lineage>
        <taxon>Bacteria</taxon>
        <taxon>Pseudomonadati</taxon>
        <taxon>Chlamydiota</taxon>
        <taxon>Chlamydiia</taxon>
        <taxon>Chlamydiales</taxon>
        <taxon>Chlamydiaceae</taxon>
        <taxon>Chlamydia/Chlamydophila group</taxon>
        <taxon>Chlamydia</taxon>
    </lineage>
</organism>
<comment type="function">
    <text evidence="1">Part of the AaxABC system, catalyzes the decarboxylation of L-arginine. The arginine uptake by the bacterium in the macrophage may be a virulence factor against the host innate immune response (By similarity).</text>
</comment>
<comment type="catalytic activity">
    <reaction>
        <text>L-arginine + H(+) = agmatine + CO2</text>
        <dbReference type="Rhea" id="RHEA:17641"/>
        <dbReference type="ChEBI" id="CHEBI:15378"/>
        <dbReference type="ChEBI" id="CHEBI:16526"/>
        <dbReference type="ChEBI" id="CHEBI:32682"/>
        <dbReference type="ChEBI" id="CHEBI:58145"/>
        <dbReference type="EC" id="4.1.1.19"/>
    </reaction>
</comment>
<comment type="cofactor">
    <cofactor evidence="1">
        <name>pyruvate</name>
        <dbReference type="ChEBI" id="CHEBI:15361"/>
    </cofactor>
    <text evidence="1">Binds 1 pyruvoyl group covalently per subunit.</text>
</comment>
<comment type="subunit">
    <text evidence="1">Trimer of an alpha-beta dimer.</text>
</comment>
<comment type="subcellular location">
    <subcellularLocation>
        <location evidence="1">Cytoplasm</location>
    </subcellularLocation>
</comment>
<comment type="similarity">
    <text evidence="2">Belongs to the pyruvoyl-dependent arginine decarboxylase family.</text>
</comment>
<proteinExistence type="inferred from homology"/>
<sequence>MPYGTRYPTLAFHTGGIGESDDGMPPQPFETFCYDSALLQAKIENFNIVPYTSVLPKELFGNIVPVDQCIKFFKHGAVLEVIMAGRGASTSDGTHAIATGVGICWGQDKNGELIGGWAAEYVEFFPTWINDEIAESHAKMWLKKSLQHELDLRSVVKHSEFQYFHNYINIKQKYGFSLTALGFLNFENADPATIK</sequence>
<reference key="1">
    <citation type="journal article" date="2003" name="Nucleic Acids Res.">
        <title>Genome sequence of Chlamydophila caviae (Chlamydia psittaci GPIC): examining the role of niche-specific genes in the evolution of the Chlamydiaceae.</title>
        <authorList>
            <person name="Read T.D."/>
            <person name="Myers G.S.A."/>
            <person name="Brunham R.C."/>
            <person name="Nelson W.C."/>
            <person name="Paulsen I.T."/>
            <person name="Heidelberg J.F."/>
            <person name="Holtzapple E.K."/>
            <person name="Khouri H.M."/>
            <person name="Federova N.B."/>
            <person name="Carty H.A."/>
            <person name="Umayam L.A."/>
            <person name="Haft D.H."/>
            <person name="Peterson J.D."/>
            <person name="Beanan M.J."/>
            <person name="White O."/>
            <person name="Salzberg S.L."/>
            <person name="Hsia R.-C."/>
            <person name="McClarty G."/>
            <person name="Rank R.G."/>
            <person name="Bavoil P.M."/>
            <person name="Fraser C.M."/>
        </authorList>
    </citation>
    <scope>NUCLEOTIDE SEQUENCE [LARGE SCALE GENOMIC DNA]</scope>
    <source>
        <strain>ATCC VR-813 / DSM 19441 / 03DC25 / GPIC</strain>
    </source>
</reference>
<dbReference type="EC" id="4.1.1.19"/>
<dbReference type="EMBL" id="AE015925">
    <property type="protein sequence ID" value="AAP05471.1"/>
    <property type="molecule type" value="Genomic_DNA"/>
</dbReference>
<dbReference type="RefSeq" id="WP_011006685.1">
    <property type="nucleotide sequence ID" value="NC_003361.3"/>
</dbReference>
<dbReference type="SMR" id="Q822F3"/>
<dbReference type="STRING" id="227941.CCA_00730"/>
<dbReference type="KEGG" id="cca:CCA_00730"/>
<dbReference type="eggNOG" id="COG1945">
    <property type="taxonomic scope" value="Bacteria"/>
</dbReference>
<dbReference type="HOGENOM" id="CLU_1313366_0_0_0"/>
<dbReference type="OrthoDB" id="9783061at2"/>
<dbReference type="Proteomes" id="UP000002193">
    <property type="component" value="Chromosome"/>
</dbReference>
<dbReference type="GO" id="GO:0005737">
    <property type="term" value="C:cytoplasm"/>
    <property type="evidence" value="ECO:0007669"/>
    <property type="project" value="UniProtKB-SubCell"/>
</dbReference>
<dbReference type="GO" id="GO:0008792">
    <property type="term" value="F:arginine decarboxylase activity"/>
    <property type="evidence" value="ECO:0007669"/>
    <property type="project" value="UniProtKB-EC"/>
</dbReference>
<dbReference type="GO" id="GO:0006527">
    <property type="term" value="P:arginine catabolic process"/>
    <property type="evidence" value="ECO:0007669"/>
    <property type="project" value="InterPro"/>
</dbReference>
<dbReference type="Gene3D" id="3.50.20.10">
    <property type="entry name" value="Pyruvoyl-Dependent Histidine Decarboxylase, subunit B"/>
    <property type="match status" value="1"/>
</dbReference>
<dbReference type="InterPro" id="IPR016104">
    <property type="entry name" value="Pyr-dep_his/arg-deCO2ase"/>
</dbReference>
<dbReference type="InterPro" id="IPR016105">
    <property type="entry name" value="Pyr-dep_his/arg-deCO2ase_sand"/>
</dbReference>
<dbReference type="InterPro" id="IPR002724">
    <property type="entry name" value="Pyruvoyl-dep_arg_deCO2ase"/>
</dbReference>
<dbReference type="PANTHER" id="PTHR40438">
    <property type="entry name" value="PYRUVOYL-DEPENDENT ARGININE DECARBOXYLASE"/>
    <property type="match status" value="1"/>
</dbReference>
<dbReference type="PANTHER" id="PTHR40438:SF1">
    <property type="entry name" value="PYRUVOYL-DEPENDENT ARGININE DECARBOXYLASE"/>
    <property type="match status" value="1"/>
</dbReference>
<dbReference type="Pfam" id="PF01862">
    <property type="entry name" value="PvlArgDC"/>
    <property type="match status" value="1"/>
</dbReference>
<dbReference type="SFLD" id="SFLDG01170">
    <property type="entry name" value="Pyruvoyl-dependent_arginine_de"/>
    <property type="match status" value="1"/>
</dbReference>
<dbReference type="SUPFAM" id="SSF56271">
    <property type="entry name" value="Pyruvoyl-dependent histidine and arginine decarboxylases"/>
    <property type="match status" value="1"/>
</dbReference>